<name>GLSA_RHOPB</name>
<reference key="1">
    <citation type="submission" date="2006-03" db="EMBL/GenBank/DDBJ databases">
        <title>Complete sequence of Rhodopseudomonas palustris BisB18.</title>
        <authorList>
            <consortium name="US DOE Joint Genome Institute"/>
            <person name="Copeland A."/>
            <person name="Lucas S."/>
            <person name="Lapidus A."/>
            <person name="Barry K."/>
            <person name="Detter J.C."/>
            <person name="Glavina del Rio T."/>
            <person name="Hammon N."/>
            <person name="Israni S."/>
            <person name="Dalin E."/>
            <person name="Tice H."/>
            <person name="Pitluck S."/>
            <person name="Chain P."/>
            <person name="Malfatti S."/>
            <person name="Shin M."/>
            <person name="Vergez L."/>
            <person name="Schmutz J."/>
            <person name="Larimer F."/>
            <person name="Land M."/>
            <person name="Hauser L."/>
            <person name="Pelletier D.A."/>
            <person name="Kyrpides N."/>
            <person name="Anderson I."/>
            <person name="Oda Y."/>
            <person name="Harwood C.S."/>
            <person name="Richardson P."/>
        </authorList>
    </citation>
    <scope>NUCLEOTIDE SEQUENCE [LARGE SCALE GENOMIC DNA]</scope>
    <source>
        <strain>BisB18</strain>
    </source>
</reference>
<evidence type="ECO:0000255" key="1">
    <source>
        <dbReference type="HAMAP-Rule" id="MF_00313"/>
    </source>
</evidence>
<accession>Q218T3</accession>
<sequence length="309" mass="32612">MTELDVVVQEIAEEIAARSDRGSVAHYIPELAKVDPAGFGLVVIDADGHVAAGGDADTAFSIQSISKVFTLTLALGKIGDRLWQRVGREPSGSPFNSIVQLEFERGIPRNPFINAGAIAVTDVILSGHQPREALGEILRFMRFLTGDPTIAIDQAVAASEQRTGFRNAALANYMKSFGVLDNPVDYTLGVYFHHCAIAMSCRQLALAGRYLAHSGRNPSTGHSVVSPGRARRINAVMLTCGHYDGSGEFAYRVGLPGKSGVGGGVLAIAPGKASIAAWSPGLDASGNSHLGRVALEALSKRMGWSIFGV</sequence>
<dbReference type="EC" id="3.5.1.2" evidence="1"/>
<dbReference type="EMBL" id="CP000301">
    <property type="protein sequence ID" value="ABD87103.1"/>
    <property type="molecule type" value="Genomic_DNA"/>
</dbReference>
<dbReference type="SMR" id="Q218T3"/>
<dbReference type="STRING" id="316056.RPC_1541"/>
<dbReference type="KEGG" id="rpc:RPC_1541"/>
<dbReference type="eggNOG" id="COG2066">
    <property type="taxonomic scope" value="Bacteria"/>
</dbReference>
<dbReference type="HOGENOM" id="CLU_027932_1_1_5"/>
<dbReference type="OrthoDB" id="9788822at2"/>
<dbReference type="GO" id="GO:0004359">
    <property type="term" value="F:glutaminase activity"/>
    <property type="evidence" value="ECO:0007669"/>
    <property type="project" value="UniProtKB-UniRule"/>
</dbReference>
<dbReference type="GO" id="GO:0006537">
    <property type="term" value="P:glutamate biosynthetic process"/>
    <property type="evidence" value="ECO:0007669"/>
    <property type="project" value="TreeGrafter"/>
</dbReference>
<dbReference type="GO" id="GO:0006543">
    <property type="term" value="P:glutamine catabolic process"/>
    <property type="evidence" value="ECO:0007669"/>
    <property type="project" value="TreeGrafter"/>
</dbReference>
<dbReference type="FunFam" id="3.40.710.10:FF:000005">
    <property type="entry name" value="Glutaminase"/>
    <property type="match status" value="1"/>
</dbReference>
<dbReference type="Gene3D" id="3.40.710.10">
    <property type="entry name" value="DD-peptidase/beta-lactamase superfamily"/>
    <property type="match status" value="1"/>
</dbReference>
<dbReference type="HAMAP" id="MF_00313">
    <property type="entry name" value="Glutaminase"/>
    <property type="match status" value="1"/>
</dbReference>
<dbReference type="InterPro" id="IPR012338">
    <property type="entry name" value="Beta-lactam/transpept-like"/>
</dbReference>
<dbReference type="InterPro" id="IPR015868">
    <property type="entry name" value="Glutaminase"/>
</dbReference>
<dbReference type="NCBIfam" id="TIGR03814">
    <property type="entry name" value="Gln_ase"/>
    <property type="match status" value="1"/>
</dbReference>
<dbReference type="NCBIfam" id="NF002133">
    <property type="entry name" value="PRK00971.1-2"/>
    <property type="match status" value="1"/>
</dbReference>
<dbReference type="PANTHER" id="PTHR12544">
    <property type="entry name" value="GLUTAMINASE"/>
    <property type="match status" value="1"/>
</dbReference>
<dbReference type="PANTHER" id="PTHR12544:SF29">
    <property type="entry name" value="GLUTAMINASE"/>
    <property type="match status" value="1"/>
</dbReference>
<dbReference type="Pfam" id="PF04960">
    <property type="entry name" value="Glutaminase"/>
    <property type="match status" value="1"/>
</dbReference>
<dbReference type="SUPFAM" id="SSF56601">
    <property type="entry name" value="beta-lactamase/transpeptidase-like"/>
    <property type="match status" value="1"/>
</dbReference>
<organism>
    <name type="scientific">Rhodopseudomonas palustris (strain BisB18)</name>
    <dbReference type="NCBI Taxonomy" id="316056"/>
    <lineage>
        <taxon>Bacteria</taxon>
        <taxon>Pseudomonadati</taxon>
        <taxon>Pseudomonadota</taxon>
        <taxon>Alphaproteobacteria</taxon>
        <taxon>Hyphomicrobiales</taxon>
        <taxon>Nitrobacteraceae</taxon>
        <taxon>Rhodopseudomonas</taxon>
    </lineage>
</organism>
<gene>
    <name evidence="1" type="primary">glsA</name>
    <name type="ordered locus">RPC_1541</name>
</gene>
<protein>
    <recommendedName>
        <fullName evidence="1">Glutaminase</fullName>
        <ecNumber evidence="1">3.5.1.2</ecNumber>
    </recommendedName>
</protein>
<keyword id="KW-0378">Hydrolase</keyword>
<proteinExistence type="inferred from homology"/>
<feature type="chain" id="PRO_0000336038" description="Glutaminase">
    <location>
        <begin position="1"/>
        <end position="309"/>
    </location>
</feature>
<feature type="binding site" evidence="1">
    <location>
        <position position="64"/>
    </location>
    <ligand>
        <name>substrate</name>
    </ligand>
</feature>
<feature type="binding site" evidence="1">
    <location>
        <position position="114"/>
    </location>
    <ligand>
        <name>substrate</name>
    </ligand>
</feature>
<feature type="binding site" evidence="1">
    <location>
        <position position="160"/>
    </location>
    <ligand>
        <name>substrate</name>
    </ligand>
</feature>
<feature type="binding site" evidence="1">
    <location>
        <position position="167"/>
    </location>
    <ligand>
        <name>substrate</name>
    </ligand>
</feature>
<feature type="binding site" evidence="1">
    <location>
        <position position="191"/>
    </location>
    <ligand>
        <name>substrate</name>
    </ligand>
</feature>
<feature type="binding site" evidence="1">
    <location>
        <position position="243"/>
    </location>
    <ligand>
        <name>substrate</name>
    </ligand>
</feature>
<feature type="binding site" evidence="1">
    <location>
        <position position="261"/>
    </location>
    <ligand>
        <name>substrate</name>
    </ligand>
</feature>
<comment type="catalytic activity">
    <reaction evidence="1">
        <text>L-glutamine + H2O = L-glutamate + NH4(+)</text>
        <dbReference type="Rhea" id="RHEA:15889"/>
        <dbReference type="ChEBI" id="CHEBI:15377"/>
        <dbReference type="ChEBI" id="CHEBI:28938"/>
        <dbReference type="ChEBI" id="CHEBI:29985"/>
        <dbReference type="ChEBI" id="CHEBI:58359"/>
        <dbReference type="EC" id="3.5.1.2"/>
    </reaction>
</comment>
<comment type="subunit">
    <text evidence="1">Homotetramer.</text>
</comment>
<comment type="similarity">
    <text evidence="1">Belongs to the glutaminase family.</text>
</comment>